<feature type="initiator methionine" description="Removed" evidence="1">
    <location>
        <position position="1"/>
    </location>
</feature>
<feature type="chain" id="PRO_0000159971" description="Superoxide dismutase [Fe]">
    <location>
        <begin position="2"/>
        <end position="213"/>
    </location>
</feature>
<feature type="binding site" evidence="1">
    <location>
        <position position="28"/>
    </location>
    <ligand>
        <name>Fe cation</name>
        <dbReference type="ChEBI" id="CHEBI:24875"/>
    </ligand>
</feature>
<feature type="binding site" evidence="1">
    <location>
        <position position="82"/>
    </location>
    <ligand>
        <name>Fe cation</name>
        <dbReference type="ChEBI" id="CHEBI:24875"/>
    </ligand>
</feature>
<feature type="binding site" evidence="1">
    <location>
        <position position="164"/>
    </location>
    <ligand>
        <name>Fe cation</name>
        <dbReference type="ChEBI" id="CHEBI:24875"/>
    </ligand>
</feature>
<feature type="binding site" evidence="1">
    <location>
        <position position="168"/>
    </location>
    <ligand>
        <name>Fe cation</name>
        <dbReference type="ChEBI" id="CHEBI:24875"/>
    </ligand>
</feature>
<sequence length="213" mass="24426">MGVHKIQPKDHLKPQNLEGISNEQIEPHFEAHYKGYVAKYNEIQEKLADQNFADRSKANQNYSEYRELKVEETFNYMGVVLHELYFGMLAPGGKGEPSEALKKKIEEDLGGLDACTNELKAAAIAFRGWAILGLDIFSGRLVVNGLDAHNVYNLTGLIPLIVIDTYEHAYYVDYKNKRPPYIDAFFKNINWDVVNERFEKAMKAYEALKDFIK</sequence>
<accession>O67470</accession>
<protein>
    <recommendedName>
        <fullName>Superoxide dismutase [Fe]</fullName>
        <ecNumber>1.15.1.1</ecNumber>
    </recommendedName>
</protein>
<comment type="function">
    <text>Destroys superoxide anion radicals which are normally produced within the cells and which are toxic to biological systems.</text>
</comment>
<comment type="catalytic activity">
    <reaction>
        <text>2 superoxide + 2 H(+) = H2O2 + O2</text>
        <dbReference type="Rhea" id="RHEA:20696"/>
        <dbReference type="ChEBI" id="CHEBI:15378"/>
        <dbReference type="ChEBI" id="CHEBI:15379"/>
        <dbReference type="ChEBI" id="CHEBI:16240"/>
        <dbReference type="ChEBI" id="CHEBI:18421"/>
        <dbReference type="EC" id="1.15.1.1"/>
    </reaction>
</comment>
<comment type="cofactor">
    <cofactor evidence="1">
        <name>Fe cation</name>
        <dbReference type="ChEBI" id="CHEBI:24875"/>
    </cofactor>
    <text evidence="1">Binds 1 Fe cation per subunit.</text>
</comment>
<comment type="subunit">
    <text evidence="1">Homotetramer.</text>
</comment>
<comment type="similarity">
    <text evidence="2">Belongs to the iron/manganese superoxide dismutase family.</text>
</comment>
<reference key="1">
    <citation type="journal article" date="1998" name="Nature">
        <title>The complete genome of the hyperthermophilic bacterium Aquifex aeolicus.</title>
        <authorList>
            <person name="Deckert G."/>
            <person name="Warren P.V."/>
            <person name="Gaasterland T."/>
            <person name="Young W.G."/>
            <person name="Lenox A.L."/>
            <person name="Graham D.E."/>
            <person name="Overbeek R."/>
            <person name="Snead M.A."/>
            <person name="Keller M."/>
            <person name="Aujay M."/>
            <person name="Huber R."/>
            <person name="Feldman R.A."/>
            <person name="Short J.M."/>
            <person name="Olsen G.J."/>
            <person name="Swanson R.V."/>
        </authorList>
    </citation>
    <scope>NUCLEOTIDE SEQUENCE [LARGE SCALE GENOMIC DNA]</scope>
    <source>
        <strain>VF5</strain>
    </source>
</reference>
<keyword id="KW-0408">Iron</keyword>
<keyword id="KW-0479">Metal-binding</keyword>
<keyword id="KW-0560">Oxidoreductase</keyword>
<keyword id="KW-1185">Reference proteome</keyword>
<gene>
    <name type="primary">sodB</name>
    <name type="synonym">sodA</name>
    <name type="ordered locus">aq_1499</name>
</gene>
<name>SODF_AQUAE</name>
<dbReference type="EC" id="1.15.1.1"/>
<dbReference type="EMBL" id="AE000657">
    <property type="protein sequence ID" value="AAC07428.1"/>
    <property type="molecule type" value="Genomic_DNA"/>
</dbReference>
<dbReference type="PIR" id="D70430">
    <property type="entry name" value="D70430"/>
</dbReference>
<dbReference type="RefSeq" id="NP_214035.1">
    <property type="nucleotide sequence ID" value="NC_000918.1"/>
</dbReference>
<dbReference type="RefSeq" id="WP_010880973.1">
    <property type="nucleotide sequence ID" value="NC_000918.1"/>
</dbReference>
<dbReference type="SMR" id="O67470"/>
<dbReference type="FunCoup" id="O67470">
    <property type="interactions" value="410"/>
</dbReference>
<dbReference type="STRING" id="224324.aq_1499"/>
<dbReference type="EnsemblBacteria" id="AAC07428">
    <property type="protein sequence ID" value="AAC07428"/>
    <property type="gene ID" value="aq_1499"/>
</dbReference>
<dbReference type="KEGG" id="aae:aq_1499"/>
<dbReference type="PATRIC" id="fig|224324.8.peg.1170"/>
<dbReference type="eggNOG" id="COG0605">
    <property type="taxonomic scope" value="Bacteria"/>
</dbReference>
<dbReference type="HOGENOM" id="CLU_031625_2_2_0"/>
<dbReference type="InParanoid" id="O67470"/>
<dbReference type="OrthoDB" id="9803125at2"/>
<dbReference type="Proteomes" id="UP000000798">
    <property type="component" value="Chromosome"/>
</dbReference>
<dbReference type="GO" id="GO:0046872">
    <property type="term" value="F:metal ion binding"/>
    <property type="evidence" value="ECO:0007669"/>
    <property type="project" value="UniProtKB-KW"/>
</dbReference>
<dbReference type="GO" id="GO:0004784">
    <property type="term" value="F:superoxide dismutase activity"/>
    <property type="evidence" value="ECO:0007669"/>
    <property type="project" value="UniProtKB-EC"/>
</dbReference>
<dbReference type="Gene3D" id="1.10.287.990">
    <property type="entry name" value="Fe,Mn superoxide dismutase (SOD) domain"/>
    <property type="match status" value="1"/>
</dbReference>
<dbReference type="Gene3D" id="3.55.40.20">
    <property type="entry name" value="Iron/manganese superoxide dismutase, C-terminal domain"/>
    <property type="match status" value="1"/>
</dbReference>
<dbReference type="InterPro" id="IPR050265">
    <property type="entry name" value="Fe/Mn_Superoxide_Dismutase"/>
</dbReference>
<dbReference type="InterPro" id="IPR001189">
    <property type="entry name" value="Mn/Fe_SOD"/>
</dbReference>
<dbReference type="InterPro" id="IPR019832">
    <property type="entry name" value="Mn/Fe_SOD_C"/>
</dbReference>
<dbReference type="InterPro" id="IPR019831">
    <property type="entry name" value="Mn/Fe_SOD_N"/>
</dbReference>
<dbReference type="InterPro" id="IPR036324">
    <property type="entry name" value="Mn/Fe_SOD_N_sf"/>
</dbReference>
<dbReference type="InterPro" id="IPR036314">
    <property type="entry name" value="SOD_C_sf"/>
</dbReference>
<dbReference type="PANTHER" id="PTHR11404">
    <property type="entry name" value="SUPEROXIDE DISMUTASE 2"/>
    <property type="match status" value="1"/>
</dbReference>
<dbReference type="PANTHER" id="PTHR11404:SF6">
    <property type="entry name" value="SUPEROXIDE DISMUTASE [MN], MITOCHONDRIAL"/>
    <property type="match status" value="1"/>
</dbReference>
<dbReference type="Pfam" id="PF02777">
    <property type="entry name" value="Sod_Fe_C"/>
    <property type="match status" value="1"/>
</dbReference>
<dbReference type="Pfam" id="PF00081">
    <property type="entry name" value="Sod_Fe_N"/>
    <property type="match status" value="1"/>
</dbReference>
<dbReference type="PIRSF" id="PIRSF000349">
    <property type="entry name" value="SODismutase"/>
    <property type="match status" value="1"/>
</dbReference>
<dbReference type="SUPFAM" id="SSF54719">
    <property type="entry name" value="Fe,Mn superoxide dismutase (SOD), C-terminal domain"/>
    <property type="match status" value="1"/>
</dbReference>
<dbReference type="SUPFAM" id="SSF46609">
    <property type="entry name" value="Fe,Mn superoxide dismutase (SOD), N-terminal domain"/>
    <property type="match status" value="1"/>
</dbReference>
<organism>
    <name type="scientific">Aquifex aeolicus (strain VF5)</name>
    <dbReference type="NCBI Taxonomy" id="224324"/>
    <lineage>
        <taxon>Bacteria</taxon>
        <taxon>Pseudomonadati</taxon>
        <taxon>Aquificota</taxon>
        <taxon>Aquificia</taxon>
        <taxon>Aquificales</taxon>
        <taxon>Aquificaceae</taxon>
        <taxon>Aquifex</taxon>
    </lineage>
</organism>
<proteinExistence type="inferred from homology"/>
<evidence type="ECO:0000250" key="1"/>
<evidence type="ECO:0000305" key="2"/>